<comment type="function">
    <text evidence="3">Involved in the assembly of the cytochrome oxidase complex. Required for the maturation and subsequent assembly of the mitochondrially encoded COX2, the precursor of subunit 2 of cytochrome oxidase.</text>
</comment>
<comment type="subunit">
    <text evidence="3 4">Interacts with COX2.</text>
</comment>
<comment type="interaction">
    <interactant intactId="EBI-36910">
        <id>Q04935</id>
    </interactant>
    <interactant intactId="EBI-5024">
        <id>P00410</id>
        <label>COX2</label>
    </interactant>
    <organismsDiffer>false</organismsDiffer>
    <experiments>3</experiments>
</comment>
<comment type="subcellular location">
    <subcellularLocation>
        <location evidence="5">Mitochondrion inner membrane</location>
        <topology evidence="5">Multi-pass membrane protein</topology>
    </subcellularLocation>
</comment>
<comment type="similarity">
    <text evidence="5">Belongs to the COX20 family.</text>
</comment>
<gene>
    <name type="primary">COX20</name>
    <name type="ordered locus">YDR231C</name>
    <name type="ORF">YD9934.15c</name>
</gene>
<evidence type="ECO:0000255" key="1"/>
<evidence type="ECO:0000256" key="2">
    <source>
        <dbReference type="SAM" id="MobiDB-lite"/>
    </source>
</evidence>
<evidence type="ECO:0000269" key="3">
    <source>
    </source>
</evidence>
<evidence type="ECO:0000269" key="4">
    <source>
    </source>
</evidence>
<evidence type="ECO:0000305" key="5"/>
<keyword id="KW-0472">Membrane</keyword>
<keyword id="KW-0496">Mitochondrion</keyword>
<keyword id="KW-0999">Mitochondrion inner membrane</keyword>
<keyword id="KW-1185">Reference proteome</keyword>
<keyword id="KW-0809">Transit peptide</keyword>
<keyword id="KW-0812">Transmembrane</keyword>
<keyword id="KW-1133">Transmembrane helix</keyword>
<reference key="1">
    <citation type="journal article" date="1996" name="Microbiology">
        <title>SPR28, a sixth member of the septin gene family in Saccharomyces cerevisiae that is expressed specifically in sporulating cells.</title>
        <authorList>
            <person name="de Virgilio C."/>
            <person name="DeMarini D.J."/>
            <person name="Pringle J.R."/>
        </authorList>
    </citation>
    <scope>NUCLEOTIDE SEQUENCE [GENOMIC DNA]</scope>
    <source>
        <strain>ATCC 204511 / S288c / AB972</strain>
    </source>
</reference>
<reference key="2">
    <citation type="journal article" date="1997" name="Nature">
        <title>The nucleotide sequence of Saccharomyces cerevisiae chromosome IV.</title>
        <authorList>
            <person name="Jacq C."/>
            <person name="Alt-Moerbe J."/>
            <person name="Andre B."/>
            <person name="Arnold W."/>
            <person name="Bahr A."/>
            <person name="Ballesta J.P.G."/>
            <person name="Bargues M."/>
            <person name="Baron L."/>
            <person name="Becker A."/>
            <person name="Biteau N."/>
            <person name="Bloecker H."/>
            <person name="Blugeon C."/>
            <person name="Boskovic J."/>
            <person name="Brandt P."/>
            <person name="Brueckner M."/>
            <person name="Buitrago M.J."/>
            <person name="Coster F."/>
            <person name="Delaveau T."/>
            <person name="del Rey F."/>
            <person name="Dujon B."/>
            <person name="Eide L.G."/>
            <person name="Garcia-Cantalejo J.M."/>
            <person name="Goffeau A."/>
            <person name="Gomez-Peris A."/>
            <person name="Granotier C."/>
            <person name="Hanemann V."/>
            <person name="Hankeln T."/>
            <person name="Hoheisel J.D."/>
            <person name="Jaeger W."/>
            <person name="Jimenez A."/>
            <person name="Jonniaux J.-L."/>
            <person name="Kraemer C."/>
            <person name="Kuester H."/>
            <person name="Laamanen P."/>
            <person name="Legros Y."/>
            <person name="Louis E.J."/>
            <person name="Moeller-Rieker S."/>
            <person name="Monnet A."/>
            <person name="Moro M."/>
            <person name="Mueller-Auer S."/>
            <person name="Nussbaumer B."/>
            <person name="Paricio N."/>
            <person name="Paulin L."/>
            <person name="Perea J."/>
            <person name="Perez-Alonso M."/>
            <person name="Perez-Ortin J.E."/>
            <person name="Pohl T.M."/>
            <person name="Prydz H."/>
            <person name="Purnelle B."/>
            <person name="Rasmussen S.W."/>
            <person name="Remacha M.A."/>
            <person name="Revuelta J.L."/>
            <person name="Rieger M."/>
            <person name="Salom D."/>
            <person name="Saluz H.P."/>
            <person name="Saiz J.E."/>
            <person name="Saren A.-M."/>
            <person name="Schaefer M."/>
            <person name="Scharfe M."/>
            <person name="Schmidt E.R."/>
            <person name="Schneider C."/>
            <person name="Scholler P."/>
            <person name="Schwarz S."/>
            <person name="Soler-Mira A."/>
            <person name="Urrestarazu L.A."/>
            <person name="Verhasselt P."/>
            <person name="Vissers S."/>
            <person name="Voet M."/>
            <person name="Volckaert G."/>
            <person name="Wagner G."/>
            <person name="Wambutt R."/>
            <person name="Wedler E."/>
            <person name="Wedler H."/>
            <person name="Woelfl S."/>
            <person name="Harris D.E."/>
            <person name="Bowman S."/>
            <person name="Brown D."/>
            <person name="Churcher C.M."/>
            <person name="Connor R."/>
            <person name="Dedman K."/>
            <person name="Gentles S."/>
            <person name="Hamlin N."/>
            <person name="Hunt S."/>
            <person name="Jones L."/>
            <person name="McDonald S."/>
            <person name="Murphy L.D."/>
            <person name="Niblett D."/>
            <person name="Odell C."/>
            <person name="Oliver K."/>
            <person name="Rajandream M.A."/>
            <person name="Richards C."/>
            <person name="Shore L."/>
            <person name="Walsh S.V."/>
            <person name="Barrell B.G."/>
            <person name="Dietrich F.S."/>
            <person name="Mulligan J.T."/>
            <person name="Allen E."/>
            <person name="Araujo R."/>
            <person name="Aviles E."/>
            <person name="Berno A."/>
            <person name="Carpenter J."/>
            <person name="Chen E."/>
            <person name="Cherry J.M."/>
            <person name="Chung E."/>
            <person name="Duncan M."/>
            <person name="Hunicke-Smith S."/>
            <person name="Hyman R.W."/>
            <person name="Komp C."/>
            <person name="Lashkari D."/>
            <person name="Lew H."/>
            <person name="Lin D."/>
            <person name="Mosedale D."/>
            <person name="Nakahara K."/>
            <person name="Namath A."/>
            <person name="Oefner P."/>
            <person name="Oh C."/>
            <person name="Petel F.X."/>
            <person name="Roberts D."/>
            <person name="Schramm S."/>
            <person name="Schroeder M."/>
            <person name="Shogren T."/>
            <person name="Shroff N."/>
            <person name="Winant A."/>
            <person name="Yelton M.A."/>
            <person name="Botstein D."/>
            <person name="Davis R.W."/>
            <person name="Johnston M."/>
            <person name="Andrews S."/>
            <person name="Brinkman R."/>
            <person name="Cooper J."/>
            <person name="Ding H."/>
            <person name="Du Z."/>
            <person name="Favello A."/>
            <person name="Fulton L."/>
            <person name="Gattung S."/>
            <person name="Greco T."/>
            <person name="Hallsworth K."/>
            <person name="Hawkins J."/>
            <person name="Hillier L.W."/>
            <person name="Jier M."/>
            <person name="Johnson D."/>
            <person name="Johnston L."/>
            <person name="Kirsten J."/>
            <person name="Kucaba T."/>
            <person name="Langston Y."/>
            <person name="Latreille P."/>
            <person name="Le T."/>
            <person name="Mardis E."/>
            <person name="Menezes S."/>
            <person name="Miller N."/>
            <person name="Nhan M."/>
            <person name="Pauley A."/>
            <person name="Peluso D."/>
            <person name="Rifkin L."/>
            <person name="Riles L."/>
            <person name="Taich A."/>
            <person name="Trevaskis E."/>
            <person name="Vignati D."/>
            <person name="Wilcox L."/>
            <person name="Wohldman P."/>
            <person name="Vaudin M."/>
            <person name="Wilson R."/>
            <person name="Waterston R."/>
            <person name="Albermann K."/>
            <person name="Hani J."/>
            <person name="Heumann K."/>
            <person name="Kleine K."/>
            <person name="Mewes H.-W."/>
            <person name="Zollner A."/>
            <person name="Zaccaria P."/>
        </authorList>
    </citation>
    <scope>NUCLEOTIDE SEQUENCE [LARGE SCALE GENOMIC DNA]</scope>
    <source>
        <strain>ATCC 204508 / S288c</strain>
    </source>
</reference>
<reference key="3">
    <citation type="journal article" date="2014" name="G3 (Bethesda)">
        <title>The reference genome sequence of Saccharomyces cerevisiae: Then and now.</title>
        <authorList>
            <person name="Engel S.R."/>
            <person name="Dietrich F.S."/>
            <person name="Fisk D.G."/>
            <person name="Binkley G."/>
            <person name="Balakrishnan R."/>
            <person name="Costanzo M.C."/>
            <person name="Dwight S.S."/>
            <person name="Hitz B.C."/>
            <person name="Karra K."/>
            <person name="Nash R.S."/>
            <person name="Weng S."/>
            <person name="Wong E.D."/>
            <person name="Lloyd P."/>
            <person name="Skrzypek M.S."/>
            <person name="Miyasato S.R."/>
            <person name="Simison M."/>
            <person name="Cherry J.M."/>
        </authorList>
    </citation>
    <scope>GENOME REANNOTATION</scope>
    <source>
        <strain>ATCC 204508 / S288c</strain>
    </source>
</reference>
<reference key="4">
    <citation type="journal article" date="2007" name="Genome Res.">
        <title>Approaching a complete repository of sequence-verified protein-encoding clones for Saccharomyces cerevisiae.</title>
        <authorList>
            <person name="Hu Y."/>
            <person name="Rolfs A."/>
            <person name="Bhullar B."/>
            <person name="Murthy T.V.S."/>
            <person name="Zhu C."/>
            <person name="Berger M.F."/>
            <person name="Camargo A.A."/>
            <person name="Kelley F."/>
            <person name="McCarron S."/>
            <person name="Jepson D."/>
            <person name="Richardson A."/>
            <person name="Raphael J."/>
            <person name="Moreira D."/>
            <person name="Taycher E."/>
            <person name="Zuo D."/>
            <person name="Mohr S."/>
            <person name="Kane M.F."/>
            <person name="Williamson J."/>
            <person name="Simpson A.J.G."/>
            <person name="Bulyk M.L."/>
            <person name="Harlow E."/>
            <person name="Marsischky G."/>
            <person name="Kolodner R.D."/>
            <person name="LaBaer J."/>
        </authorList>
    </citation>
    <scope>NUCLEOTIDE SEQUENCE [GENOMIC DNA]</scope>
    <source>
        <strain>ATCC 204508 / S288c</strain>
    </source>
</reference>
<reference key="5">
    <citation type="journal article" date="2000" name="J. Biol. Chem.">
        <title>Identification of Cox20p, a novel protein involved in the maturation and assembly of cytochrome oxidase subunit 2.</title>
        <authorList>
            <person name="Hell K."/>
            <person name="Tzagoloff A."/>
            <person name="Neupert W."/>
            <person name="Stuart R.A."/>
        </authorList>
    </citation>
    <scope>FUNCTION</scope>
    <scope>SUBCELLULAR LOCATION</scope>
    <scope>INTERACTION WITH COX2</scope>
</reference>
<reference key="6">
    <citation type="journal article" date="2001" name="J. Cell Biol.">
        <title>Mba1, a novel component of the mitochondrial protein export machinery of the yeast Saccharomyces cerevisiae.</title>
        <authorList>
            <person name="Preuss M."/>
            <person name="Leonhard K."/>
            <person name="Hell K."/>
            <person name="Stuart R.A."/>
            <person name="Neupert W."/>
            <person name="Herrmann J.M."/>
        </authorList>
    </citation>
    <scope>INTERACTION WITH COX2</scope>
</reference>
<reference key="7">
    <citation type="journal article" date="2003" name="Nature">
        <title>Global analysis of protein localization in budding yeast.</title>
        <authorList>
            <person name="Huh W.-K."/>
            <person name="Falvo J.V."/>
            <person name="Gerke L.C."/>
            <person name="Carroll A.S."/>
            <person name="Howson R.W."/>
            <person name="Weissman J.S."/>
            <person name="O'Shea E.K."/>
        </authorList>
    </citation>
    <scope>SUBCELLULAR LOCATION [LARGE SCALE ANALYSIS]</scope>
</reference>
<reference key="8">
    <citation type="journal article" date="2003" name="Proc. Natl. Acad. Sci. U.S.A.">
        <title>The proteome of Saccharomyces cerevisiae mitochondria.</title>
        <authorList>
            <person name="Sickmann A."/>
            <person name="Reinders J."/>
            <person name="Wagner Y."/>
            <person name="Joppich C."/>
            <person name="Zahedi R.P."/>
            <person name="Meyer H.E."/>
            <person name="Schoenfisch B."/>
            <person name="Perschil I."/>
            <person name="Chacinska A."/>
            <person name="Guiard B."/>
            <person name="Rehling P."/>
            <person name="Pfanner N."/>
            <person name="Meisinger C."/>
        </authorList>
    </citation>
    <scope>SUBCELLULAR LOCATION [LARGE SCALE ANALYSIS]</scope>
    <source>
        <strain>ATCC 76625 / YPH499</strain>
    </source>
</reference>
<accession>Q04935</accession>
<accession>D6VSL2</accession>
<dbReference type="EMBL" id="Z48612">
    <property type="protein sequence ID" value="CAA88510.1"/>
    <property type="molecule type" value="Genomic_DNA"/>
</dbReference>
<dbReference type="EMBL" id="AY557731">
    <property type="protein sequence ID" value="AAS56057.1"/>
    <property type="molecule type" value="Genomic_DNA"/>
</dbReference>
<dbReference type="EMBL" id="BK006938">
    <property type="protein sequence ID" value="DAA12072.1"/>
    <property type="molecule type" value="Genomic_DNA"/>
</dbReference>
<dbReference type="PIR" id="S59437">
    <property type="entry name" value="S59437"/>
</dbReference>
<dbReference type="RefSeq" id="NP_010517.1">
    <property type="nucleotide sequence ID" value="NM_001180539.1"/>
</dbReference>
<dbReference type="BioGRID" id="32282">
    <property type="interactions" value="364"/>
</dbReference>
<dbReference type="DIP" id="DIP-5755N"/>
<dbReference type="FunCoup" id="Q04935">
    <property type="interactions" value="318"/>
</dbReference>
<dbReference type="IntAct" id="Q04935">
    <property type="interactions" value="3"/>
</dbReference>
<dbReference type="MINT" id="Q04935"/>
<dbReference type="STRING" id="4932.YDR231C"/>
<dbReference type="iPTMnet" id="Q04935"/>
<dbReference type="PaxDb" id="4932-YDR231C"/>
<dbReference type="PeptideAtlas" id="Q04935"/>
<dbReference type="EnsemblFungi" id="YDR231C_mRNA">
    <property type="protein sequence ID" value="YDR231C"/>
    <property type="gene ID" value="YDR231C"/>
</dbReference>
<dbReference type="GeneID" id="851817"/>
<dbReference type="KEGG" id="sce:YDR231C"/>
<dbReference type="AGR" id="SGD:S000002639"/>
<dbReference type="SGD" id="S000002639">
    <property type="gene designation" value="COX20"/>
</dbReference>
<dbReference type="VEuPathDB" id="FungiDB:YDR231C"/>
<dbReference type="eggNOG" id="ENOG502S3BD">
    <property type="taxonomic scope" value="Eukaryota"/>
</dbReference>
<dbReference type="HOGENOM" id="CLU_125578_0_0_1"/>
<dbReference type="InParanoid" id="Q04935"/>
<dbReference type="OMA" id="IVGWEQC"/>
<dbReference type="OrthoDB" id="14603at2759"/>
<dbReference type="BioCyc" id="YEAST:G3O-29809-MONOMER"/>
<dbReference type="BioGRID-ORCS" id="851817">
    <property type="hits" value="3 hits in 10 CRISPR screens"/>
</dbReference>
<dbReference type="PRO" id="PR:Q04935"/>
<dbReference type="Proteomes" id="UP000002311">
    <property type="component" value="Chromosome IV"/>
</dbReference>
<dbReference type="RNAct" id="Q04935">
    <property type="molecule type" value="protein"/>
</dbReference>
<dbReference type="GO" id="GO:0005743">
    <property type="term" value="C:mitochondrial inner membrane"/>
    <property type="evidence" value="ECO:0000314"/>
    <property type="project" value="SGD"/>
</dbReference>
<dbReference type="GO" id="GO:0005739">
    <property type="term" value="C:mitochondrion"/>
    <property type="evidence" value="ECO:0007005"/>
    <property type="project" value="SGD"/>
</dbReference>
<dbReference type="GO" id="GO:0051082">
    <property type="term" value="F:unfolded protein binding"/>
    <property type="evidence" value="ECO:0000314"/>
    <property type="project" value="SGD"/>
</dbReference>
<dbReference type="GO" id="GO:0033617">
    <property type="term" value="P:mitochondrial cytochrome c oxidase assembly"/>
    <property type="evidence" value="ECO:0000315"/>
    <property type="project" value="SGD"/>
</dbReference>
<dbReference type="GO" id="GO:0043069">
    <property type="term" value="P:negative regulation of programmed cell death"/>
    <property type="evidence" value="ECO:0000314"/>
    <property type="project" value="SGD"/>
</dbReference>
<dbReference type="InterPro" id="IPR022533">
    <property type="entry name" value="Cox20"/>
</dbReference>
<dbReference type="PANTHER" id="PTHR31586:SF1">
    <property type="entry name" value="CYTOCHROME C OXIDASE ASSEMBLY PROTEIN COX20, MITOCHONDRIAL"/>
    <property type="match status" value="1"/>
</dbReference>
<dbReference type="PANTHER" id="PTHR31586">
    <property type="entry name" value="CYTOCHROME C OXIDASE PROTEIN 20"/>
    <property type="match status" value="1"/>
</dbReference>
<dbReference type="Pfam" id="PF12597">
    <property type="entry name" value="Cox20"/>
    <property type="match status" value="1"/>
</dbReference>
<dbReference type="PIRSF" id="PIRSF007871">
    <property type="entry name" value="Cox20"/>
    <property type="match status" value="1"/>
</dbReference>
<name>COX20_YEAST</name>
<feature type="transit peptide" description="Mitochondrion" evidence="1">
    <location>
        <begin position="1"/>
        <end status="unknown"/>
    </location>
</feature>
<feature type="chain" id="PRO_0000227690" description="Cytochrome c oxidase assembly protein COX20, mitochondrial">
    <location>
        <begin status="unknown"/>
        <end position="205"/>
    </location>
</feature>
<feature type="topological domain" description="Mitochondrial intermembrane" evidence="5">
    <location>
        <begin status="unknown"/>
        <end position="90"/>
    </location>
</feature>
<feature type="transmembrane region" description="Helical" evidence="1">
    <location>
        <begin position="91"/>
        <end position="109"/>
    </location>
</feature>
<feature type="topological domain" description="Mitochondrial matrix" evidence="5">
    <location>
        <begin position="110"/>
        <end position="115"/>
    </location>
</feature>
<feature type="transmembrane region" description="Helical" evidence="1">
    <location>
        <begin position="116"/>
        <end position="132"/>
    </location>
</feature>
<feature type="topological domain" description="Mitochondrial intermembrane" evidence="5">
    <location>
        <begin position="133"/>
        <end position="205"/>
    </location>
</feature>
<feature type="region of interest" description="Disordered" evidence="2">
    <location>
        <begin position="1"/>
        <end position="27"/>
    </location>
</feature>
<feature type="region of interest" description="Disordered" evidence="2">
    <location>
        <begin position="165"/>
        <end position="205"/>
    </location>
</feature>
<feature type="compositionally biased region" description="Polar residues" evidence="2">
    <location>
        <begin position="184"/>
        <end position="196"/>
    </location>
</feature>
<protein>
    <recommendedName>
        <fullName>Cytochrome c oxidase assembly protein COX20, mitochondrial</fullName>
    </recommendedName>
</protein>
<sequence>MRWWPWSNQTEDQKQQQQPQGKADGDRVLTNYSRGQKILLEDTPPKFADDLSNSQLAKKQERATLKEAWDSIRWSDFSLQKLTSIPCFRDAGMLGFSSMFLMGSIIFIYHKSPTKATNWAMSSLILGSIVGWEQCRLKRQKSFQIAQLAKETVAKKEKPMLHNVPHDPSLPGQWEAAKNEKQSQFEQSNQNLSQASSEKKWYKFW</sequence>
<organism>
    <name type="scientific">Saccharomyces cerevisiae (strain ATCC 204508 / S288c)</name>
    <name type="common">Baker's yeast</name>
    <dbReference type="NCBI Taxonomy" id="559292"/>
    <lineage>
        <taxon>Eukaryota</taxon>
        <taxon>Fungi</taxon>
        <taxon>Dikarya</taxon>
        <taxon>Ascomycota</taxon>
        <taxon>Saccharomycotina</taxon>
        <taxon>Saccharomycetes</taxon>
        <taxon>Saccharomycetales</taxon>
        <taxon>Saccharomycetaceae</taxon>
        <taxon>Saccharomyces</taxon>
    </lineage>
</organism>
<proteinExistence type="evidence at protein level"/>